<evidence type="ECO:0000255" key="1">
    <source>
        <dbReference type="HAMAP-Rule" id="MF_00472"/>
    </source>
</evidence>
<reference key="1">
    <citation type="journal article" date="2006" name="Appl. Environ. Microbiol.">
        <title>Complete genome sequence of the marine, chemolithoautotrophic, ammonia-oxidizing bacterium Nitrosococcus oceani ATCC 19707.</title>
        <authorList>
            <person name="Klotz M.G."/>
            <person name="Arp D.J."/>
            <person name="Chain P.S.G."/>
            <person name="El-Sheikh A.F."/>
            <person name="Hauser L.J."/>
            <person name="Hommes N.G."/>
            <person name="Larimer F.W."/>
            <person name="Malfatti S.A."/>
            <person name="Norton J.M."/>
            <person name="Poret-Peterson A.T."/>
            <person name="Vergez L.M."/>
            <person name="Ward B.B."/>
        </authorList>
    </citation>
    <scope>NUCLEOTIDE SEQUENCE [LARGE SCALE GENOMIC DNA]</scope>
    <source>
        <strain>ATCC 19707 / BCRC 17464 / JCM 30415 / NCIMB 11848 / C-107</strain>
    </source>
</reference>
<accession>Q3J8U2</accession>
<proteinExistence type="inferred from homology"/>
<comment type="function">
    <text evidence="1">O-methyltransferase that catalyzes the 2 O-methylation steps in the ubiquinone biosynthetic pathway.</text>
</comment>
<comment type="catalytic activity">
    <reaction evidence="1">
        <text>a 3-demethylubiquinol + S-adenosyl-L-methionine = a ubiquinol + S-adenosyl-L-homocysteine + H(+)</text>
        <dbReference type="Rhea" id="RHEA:44380"/>
        <dbReference type="Rhea" id="RHEA-COMP:9566"/>
        <dbReference type="Rhea" id="RHEA-COMP:10914"/>
        <dbReference type="ChEBI" id="CHEBI:15378"/>
        <dbReference type="ChEBI" id="CHEBI:17976"/>
        <dbReference type="ChEBI" id="CHEBI:57856"/>
        <dbReference type="ChEBI" id="CHEBI:59789"/>
        <dbReference type="ChEBI" id="CHEBI:84422"/>
        <dbReference type="EC" id="2.1.1.64"/>
    </reaction>
</comment>
<comment type="catalytic activity">
    <reaction evidence="1">
        <text>a 3-(all-trans-polyprenyl)benzene-1,2-diol + S-adenosyl-L-methionine = a 2-methoxy-6-(all-trans-polyprenyl)phenol + S-adenosyl-L-homocysteine + H(+)</text>
        <dbReference type="Rhea" id="RHEA:31411"/>
        <dbReference type="Rhea" id="RHEA-COMP:9550"/>
        <dbReference type="Rhea" id="RHEA-COMP:9551"/>
        <dbReference type="ChEBI" id="CHEBI:15378"/>
        <dbReference type="ChEBI" id="CHEBI:57856"/>
        <dbReference type="ChEBI" id="CHEBI:59789"/>
        <dbReference type="ChEBI" id="CHEBI:62729"/>
        <dbReference type="ChEBI" id="CHEBI:62731"/>
        <dbReference type="EC" id="2.1.1.222"/>
    </reaction>
</comment>
<comment type="pathway">
    <text evidence="1">Cofactor biosynthesis; ubiquinone biosynthesis.</text>
</comment>
<comment type="similarity">
    <text evidence="1">Belongs to the methyltransferase superfamily. UbiG/COQ3 family.</text>
</comment>
<organism>
    <name type="scientific">Nitrosococcus oceani (strain ATCC 19707 / BCRC 17464 / JCM 30415 / NCIMB 11848 / C-107)</name>
    <dbReference type="NCBI Taxonomy" id="323261"/>
    <lineage>
        <taxon>Bacteria</taxon>
        <taxon>Pseudomonadati</taxon>
        <taxon>Pseudomonadota</taxon>
        <taxon>Gammaproteobacteria</taxon>
        <taxon>Chromatiales</taxon>
        <taxon>Chromatiaceae</taxon>
        <taxon>Nitrosococcus</taxon>
    </lineage>
</organism>
<dbReference type="EC" id="2.1.1.222" evidence="1"/>
<dbReference type="EC" id="2.1.1.64" evidence="1"/>
<dbReference type="EMBL" id="CP000127">
    <property type="protein sequence ID" value="ABA58754.1"/>
    <property type="molecule type" value="Genomic_DNA"/>
</dbReference>
<dbReference type="RefSeq" id="WP_002809103.1">
    <property type="nucleotide sequence ID" value="NC_007484.1"/>
</dbReference>
<dbReference type="SMR" id="Q3J8U2"/>
<dbReference type="FunCoup" id="Q3J8U2">
    <property type="interactions" value="426"/>
</dbReference>
<dbReference type="STRING" id="323261.Noc_2296"/>
<dbReference type="KEGG" id="noc:Noc_2296"/>
<dbReference type="eggNOG" id="COG2227">
    <property type="taxonomic scope" value="Bacteria"/>
</dbReference>
<dbReference type="HOGENOM" id="CLU_042432_5_0_6"/>
<dbReference type="InParanoid" id="Q3J8U2"/>
<dbReference type="UniPathway" id="UPA00232"/>
<dbReference type="Proteomes" id="UP000006838">
    <property type="component" value="Chromosome"/>
</dbReference>
<dbReference type="GO" id="GO:0102208">
    <property type="term" value="F:2-polyprenyl-6-hydroxyphenol methylase activity"/>
    <property type="evidence" value="ECO:0007669"/>
    <property type="project" value="UniProtKB-EC"/>
</dbReference>
<dbReference type="GO" id="GO:0061542">
    <property type="term" value="F:3-demethylubiquinol 3-O-methyltransferase activity"/>
    <property type="evidence" value="ECO:0007669"/>
    <property type="project" value="UniProtKB-UniRule"/>
</dbReference>
<dbReference type="GO" id="GO:0010420">
    <property type="term" value="F:polyprenyldihydroxybenzoate methyltransferase activity"/>
    <property type="evidence" value="ECO:0007669"/>
    <property type="project" value="InterPro"/>
</dbReference>
<dbReference type="GO" id="GO:0032259">
    <property type="term" value="P:methylation"/>
    <property type="evidence" value="ECO:0007669"/>
    <property type="project" value="UniProtKB-KW"/>
</dbReference>
<dbReference type="CDD" id="cd02440">
    <property type="entry name" value="AdoMet_MTases"/>
    <property type="match status" value="1"/>
</dbReference>
<dbReference type="FunFam" id="3.40.50.150:FF:000028">
    <property type="entry name" value="Ubiquinone biosynthesis O-methyltransferase"/>
    <property type="match status" value="1"/>
</dbReference>
<dbReference type="Gene3D" id="3.40.50.150">
    <property type="entry name" value="Vaccinia Virus protein VP39"/>
    <property type="match status" value="1"/>
</dbReference>
<dbReference type="HAMAP" id="MF_00472">
    <property type="entry name" value="UbiG"/>
    <property type="match status" value="1"/>
</dbReference>
<dbReference type="InterPro" id="IPR013216">
    <property type="entry name" value="Methyltransf_11"/>
</dbReference>
<dbReference type="InterPro" id="IPR029063">
    <property type="entry name" value="SAM-dependent_MTases_sf"/>
</dbReference>
<dbReference type="InterPro" id="IPR010233">
    <property type="entry name" value="UbiG_MeTrfase"/>
</dbReference>
<dbReference type="NCBIfam" id="TIGR01983">
    <property type="entry name" value="UbiG"/>
    <property type="match status" value="1"/>
</dbReference>
<dbReference type="PANTHER" id="PTHR43464">
    <property type="entry name" value="METHYLTRANSFERASE"/>
    <property type="match status" value="1"/>
</dbReference>
<dbReference type="PANTHER" id="PTHR43464:SF19">
    <property type="entry name" value="UBIQUINONE BIOSYNTHESIS O-METHYLTRANSFERASE, MITOCHONDRIAL"/>
    <property type="match status" value="1"/>
</dbReference>
<dbReference type="Pfam" id="PF08241">
    <property type="entry name" value="Methyltransf_11"/>
    <property type="match status" value="1"/>
</dbReference>
<dbReference type="SUPFAM" id="SSF53335">
    <property type="entry name" value="S-adenosyl-L-methionine-dependent methyltransferases"/>
    <property type="match status" value="1"/>
</dbReference>
<feature type="chain" id="PRO_0000241714" description="Ubiquinone biosynthesis O-methyltransferase">
    <location>
        <begin position="1"/>
        <end position="236"/>
    </location>
</feature>
<feature type="binding site" evidence="1">
    <location>
        <position position="40"/>
    </location>
    <ligand>
        <name>S-adenosyl-L-methionine</name>
        <dbReference type="ChEBI" id="CHEBI:59789"/>
    </ligand>
</feature>
<feature type="binding site" evidence="1">
    <location>
        <position position="59"/>
    </location>
    <ligand>
        <name>S-adenosyl-L-methionine</name>
        <dbReference type="ChEBI" id="CHEBI:59789"/>
    </ligand>
</feature>
<feature type="binding site" evidence="1">
    <location>
        <position position="80"/>
    </location>
    <ligand>
        <name>S-adenosyl-L-methionine</name>
        <dbReference type="ChEBI" id="CHEBI:59789"/>
    </ligand>
</feature>
<feature type="binding site" evidence="1">
    <location>
        <position position="124"/>
    </location>
    <ligand>
        <name>S-adenosyl-L-methionine</name>
        <dbReference type="ChEBI" id="CHEBI:59789"/>
    </ligand>
</feature>
<protein>
    <recommendedName>
        <fullName evidence="1">Ubiquinone biosynthesis O-methyltransferase</fullName>
    </recommendedName>
    <alternativeName>
        <fullName evidence="1">2-polyprenyl-6-hydroxyphenol methylase</fullName>
        <ecNumber evidence="1">2.1.1.222</ecNumber>
    </alternativeName>
    <alternativeName>
        <fullName evidence="1">3-demethylubiquinone 3-O-methyltransferase</fullName>
        <ecNumber evidence="1">2.1.1.64</ecNumber>
    </alternativeName>
</protein>
<gene>
    <name evidence="1" type="primary">ubiG</name>
    <name type="ordered locus">Noc_2296</name>
</gene>
<sequence>MNETRINVDPNEIAKFEQLAHRWWDQEGEFKPLHDINPLRLEYIRNHASLAGKRILDVGCGGGILTEELTRLGAKVTGIDLGKAPLSVARLHALEEGLEIDYQQISVERLAETKAGSFDVITNLEMLEHVPYPASVVAACGQLLKPGGKVFFSTLNRTPKAYLFAVIGAEYALRLLPKGTHDYHRFIRPAELETWCRKGGIELQNLTGLHYNPLTQRYRLGKDINVNYLAYGAKKE</sequence>
<keyword id="KW-0489">Methyltransferase</keyword>
<keyword id="KW-1185">Reference proteome</keyword>
<keyword id="KW-0949">S-adenosyl-L-methionine</keyword>
<keyword id="KW-0808">Transferase</keyword>
<keyword id="KW-0831">Ubiquinone biosynthesis</keyword>
<name>UBIG_NITOC</name>